<proteinExistence type="inferred from homology"/>
<reference key="1">
    <citation type="journal article" date="1994" name="J. Bacteriol.">
        <title>The lcrB (yscN/U) gene cluster of Yersinia pseudotuberculosis is involved in Yop secretion and shows high homology to the spa gene clusters of Shigella flexneri and Salmonella typhimurium.</title>
        <authorList>
            <person name="Bergman T."/>
            <person name="Erickson K."/>
            <person name="Galyov E."/>
            <person name="Persson C."/>
            <person name="Wolf-Watz H."/>
        </authorList>
    </citation>
    <scope>NUCLEOTIDE SEQUENCE [GENOMIC DNA]</scope>
    <source>
        <strain>YPIII / Serotype O:3</strain>
        <plasmid>pIB1</plasmid>
    </source>
</reference>
<reference key="2">
    <citation type="journal article" date="2004" name="Proc. Natl. Acad. Sci. U.S.A.">
        <title>Insights into the evolution of Yersinia pestis through whole-genome comparison with Yersinia pseudotuberculosis.</title>
        <authorList>
            <person name="Chain P.S.G."/>
            <person name="Carniel E."/>
            <person name="Larimer F.W."/>
            <person name="Lamerdin J."/>
            <person name="Stoutland P.O."/>
            <person name="Regala W.M."/>
            <person name="Georgescu A.M."/>
            <person name="Vergez L.M."/>
            <person name="Land M.L."/>
            <person name="Motin V.L."/>
            <person name="Brubaker R.R."/>
            <person name="Fowler J."/>
            <person name="Hinnebusch J."/>
            <person name="Marceau M."/>
            <person name="Medigue C."/>
            <person name="Simonet M."/>
            <person name="Chenal-Francisque V."/>
            <person name="Souza B."/>
            <person name="Dacheux D."/>
            <person name="Elliott J.M."/>
            <person name="Derbise A."/>
            <person name="Hauser L.J."/>
            <person name="Garcia E."/>
        </authorList>
    </citation>
    <scope>NUCLEOTIDE SEQUENCE [LARGE SCALE GENOMIC DNA]</scope>
    <source>
        <strain>IP32953</strain>
        <plasmid>pYV</plasmid>
    </source>
</reference>
<geneLocation type="plasmid">
    <name>pIB1</name>
</geneLocation>
<geneLocation type="plasmid">
    <name>pYV</name>
</geneLocation>
<name>YSCR_YERPS</name>
<gene>
    <name type="primary">yscR</name>
    <name type="ordered locus">pYV0071</name>
</gene>
<feature type="chain" id="PRO_0000192001" description="Yop proteins translocation protein R">
    <location>
        <begin position="1"/>
        <end position="217"/>
    </location>
</feature>
<feature type="transmembrane region" description="Helical" evidence="1">
    <location>
        <begin position="11"/>
        <end position="31"/>
    </location>
</feature>
<feature type="transmembrane region" description="Helical" evidence="1">
    <location>
        <begin position="53"/>
        <end position="73"/>
    </location>
</feature>
<feature type="transmembrane region" description="Helical" evidence="1">
    <location>
        <begin position="157"/>
        <end position="177"/>
    </location>
</feature>
<feature type="transmembrane region" description="Helical" evidence="1">
    <location>
        <begin position="181"/>
        <end position="201"/>
    </location>
</feature>
<keyword id="KW-1003">Cell membrane</keyword>
<keyword id="KW-0472">Membrane</keyword>
<keyword id="KW-0614">Plasmid</keyword>
<keyword id="KW-0812">Transmembrane</keyword>
<keyword id="KW-1133">Transmembrane helix</keyword>
<keyword id="KW-0843">Virulence</keyword>
<dbReference type="EMBL" id="L25667">
    <property type="protein sequence ID" value="AAA27678.1"/>
    <property type="molecule type" value="Genomic_DNA"/>
</dbReference>
<dbReference type="EMBL" id="BX936399">
    <property type="protein sequence ID" value="CAF25414.1"/>
    <property type="molecule type" value="Genomic_DNA"/>
</dbReference>
<dbReference type="RefSeq" id="WP_002212947.1">
    <property type="nucleotide sequence ID" value="NZ_CP009711.1"/>
</dbReference>
<dbReference type="SMR" id="P69981"/>
<dbReference type="KEGG" id="ypo:BZ17_4263"/>
<dbReference type="KEGG" id="yps:pYV0071"/>
<dbReference type="PATRIC" id="fig|273123.14.peg.4499"/>
<dbReference type="Proteomes" id="UP000001011">
    <property type="component" value="Plasmid pYV"/>
</dbReference>
<dbReference type="GO" id="GO:0005886">
    <property type="term" value="C:plasma membrane"/>
    <property type="evidence" value="ECO:0007669"/>
    <property type="project" value="UniProtKB-SubCell"/>
</dbReference>
<dbReference type="GO" id="GO:0009306">
    <property type="term" value="P:protein secretion"/>
    <property type="evidence" value="ECO:0007669"/>
    <property type="project" value="InterPro"/>
</dbReference>
<dbReference type="InterPro" id="IPR005838">
    <property type="entry name" value="T3SS_IM_P"/>
</dbReference>
<dbReference type="InterPro" id="IPR005773">
    <property type="entry name" value="T3SS_YscR-like"/>
</dbReference>
<dbReference type="NCBIfam" id="NF009438">
    <property type="entry name" value="PRK12797.1"/>
    <property type="match status" value="1"/>
</dbReference>
<dbReference type="NCBIfam" id="TIGR01102">
    <property type="entry name" value="yscR"/>
    <property type="match status" value="1"/>
</dbReference>
<dbReference type="PANTHER" id="PTHR30587">
    <property type="entry name" value="FLAGELLAR BIOSYNTHETIC PROTEIN FLIP"/>
    <property type="match status" value="1"/>
</dbReference>
<dbReference type="PANTHER" id="PTHR30587:SF2">
    <property type="entry name" value="SURFACE PRESENTATION OF ANTIGENS PROTEIN SPAP"/>
    <property type="match status" value="1"/>
</dbReference>
<dbReference type="Pfam" id="PF00813">
    <property type="entry name" value="FliP"/>
    <property type="match status" value="1"/>
</dbReference>
<dbReference type="PRINTS" id="PR01302">
    <property type="entry name" value="TYPE3IMPPROT"/>
</dbReference>
<dbReference type="PROSITE" id="PS01060">
    <property type="entry name" value="FLIP_1"/>
    <property type="match status" value="1"/>
</dbReference>
<dbReference type="PROSITE" id="PS01061">
    <property type="entry name" value="FLIP_2"/>
    <property type="match status" value="1"/>
</dbReference>
<protein>
    <recommendedName>
        <fullName>Yop proteins translocation protein R</fullName>
    </recommendedName>
</protein>
<comment type="function">
    <text>Component of the yop secretion machinery. May have a role in the negative pathway regulation of yop expression controlled by calcium.</text>
</comment>
<comment type="subcellular location">
    <subcellularLocation>
        <location evidence="2">Cell membrane</location>
        <topology evidence="2">Multi-pass membrane protein</topology>
    </subcellularLocation>
</comment>
<comment type="similarity">
    <text evidence="2">Belongs to the FliP/MopC/SpaP family.</text>
</comment>
<sequence length="217" mass="24427">MIQLPDEINLIIVLSLLTLLPLISVMATSFVKFAVVFSLLRNALGVQQIPPNMAMYGLAIILSLYVMAPVGFATQDYLQANEVSLTNIESVEKFFDEGLAPYRMFLKQHIQAQEYSFFVDSTKQLWPKQYADRLESDSLFILLPAFTVSELTRAFEIGFLIYLPFIVIDLVISNILLAMGMMMVSPMTISLPFKLLLFVLLDGWTRLTHGLVISYGG</sequence>
<evidence type="ECO:0000255" key="1"/>
<evidence type="ECO:0000305" key="2"/>
<accession>P69981</accession>
<accession>P40297</accession>
<accession>P42714</accession>
<accession>Q663J5</accession>
<organism>
    <name type="scientific">Yersinia pseudotuberculosis serotype I (strain IP32953)</name>
    <dbReference type="NCBI Taxonomy" id="273123"/>
    <lineage>
        <taxon>Bacteria</taxon>
        <taxon>Pseudomonadati</taxon>
        <taxon>Pseudomonadota</taxon>
        <taxon>Gammaproteobacteria</taxon>
        <taxon>Enterobacterales</taxon>
        <taxon>Yersiniaceae</taxon>
        <taxon>Yersinia</taxon>
    </lineage>
</organism>